<name>SYA_STRPD</name>
<dbReference type="EC" id="6.1.1.7" evidence="1"/>
<dbReference type="EMBL" id="CP000260">
    <property type="protein sequence ID" value="ABF34267.1"/>
    <property type="molecule type" value="Genomic_DNA"/>
</dbReference>
<dbReference type="SMR" id="Q1JG77"/>
<dbReference type="KEGG" id="sph:MGAS10270_Spy1202"/>
<dbReference type="HOGENOM" id="CLU_004485_1_1_9"/>
<dbReference type="Proteomes" id="UP000002436">
    <property type="component" value="Chromosome"/>
</dbReference>
<dbReference type="GO" id="GO:0005829">
    <property type="term" value="C:cytosol"/>
    <property type="evidence" value="ECO:0007669"/>
    <property type="project" value="TreeGrafter"/>
</dbReference>
<dbReference type="GO" id="GO:0004813">
    <property type="term" value="F:alanine-tRNA ligase activity"/>
    <property type="evidence" value="ECO:0007669"/>
    <property type="project" value="UniProtKB-UniRule"/>
</dbReference>
<dbReference type="GO" id="GO:0002161">
    <property type="term" value="F:aminoacyl-tRNA deacylase activity"/>
    <property type="evidence" value="ECO:0007669"/>
    <property type="project" value="TreeGrafter"/>
</dbReference>
<dbReference type="GO" id="GO:0005524">
    <property type="term" value="F:ATP binding"/>
    <property type="evidence" value="ECO:0007669"/>
    <property type="project" value="UniProtKB-UniRule"/>
</dbReference>
<dbReference type="GO" id="GO:0140096">
    <property type="term" value="F:catalytic activity, acting on a protein"/>
    <property type="evidence" value="ECO:0007669"/>
    <property type="project" value="UniProtKB-ARBA"/>
</dbReference>
<dbReference type="GO" id="GO:0016740">
    <property type="term" value="F:transferase activity"/>
    <property type="evidence" value="ECO:0007669"/>
    <property type="project" value="UniProtKB-ARBA"/>
</dbReference>
<dbReference type="GO" id="GO:0000049">
    <property type="term" value="F:tRNA binding"/>
    <property type="evidence" value="ECO:0007669"/>
    <property type="project" value="UniProtKB-KW"/>
</dbReference>
<dbReference type="GO" id="GO:0008270">
    <property type="term" value="F:zinc ion binding"/>
    <property type="evidence" value="ECO:0007669"/>
    <property type="project" value="UniProtKB-UniRule"/>
</dbReference>
<dbReference type="GO" id="GO:0006419">
    <property type="term" value="P:alanyl-tRNA aminoacylation"/>
    <property type="evidence" value="ECO:0007669"/>
    <property type="project" value="UniProtKB-UniRule"/>
</dbReference>
<dbReference type="CDD" id="cd00673">
    <property type="entry name" value="AlaRS_core"/>
    <property type="match status" value="1"/>
</dbReference>
<dbReference type="FunFam" id="3.10.310.40:FF:000001">
    <property type="entry name" value="Alanine--tRNA ligase"/>
    <property type="match status" value="1"/>
</dbReference>
<dbReference type="FunFam" id="3.30.54.20:FF:000001">
    <property type="entry name" value="Alanine--tRNA ligase"/>
    <property type="match status" value="1"/>
</dbReference>
<dbReference type="FunFam" id="3.30.930.10:FF:000046">
    <property type="entry name" value="Alanine--tRNA ligase"/>
    <property type="match status" value="1"/>
</dbReference>
<dbReference type="FunFam" id="3.30.980.10:FF:000004">
    <property type="entry name" value="Alanine--tRNA ligase, cytoplasmic"/>
    <property type="match status" value="1"/>
</dbReference>
<dbReference type="Gene3D" id="2.40.30.130">
    <property type="match status" value="1"/>
</dbReference>
<dbReference type="Gene3D" id="3.10.310.40">
    <property type="match status" value="1"/>
</dbReference>
<dbReference type="Gene3D" id="3.30.54.20">
    <property type="match status" value="1"/>
</dbReference>
<dbReference type="Gene3D" id="6.10.250.550">
    <property type="match status" value="1"/>
</dbReference>
<dbReference type="Gene3D" id="3.30.930.10">
    <property type="entry name" value="Bira Bifunctional Protein, Domain 2"/>
    <property type="match status" value="1"/>
</dbReference>
<dbReference type="Gene3D" id="3.30.980.10">
    <property type="entry name" value="Threonyl-trna Synthetase, Chain A, domain 2"/>
    <property type="match status" value="1"/>
</dbReference>
<dbReference type="HAMAP" id="MF_00036_B">
    <property type="entry name" value="Ala_tRNA_synth_B"/>
    <property type="match status" value="1"/>
</dbReference>
<dbReference type="InterPro" id="IPR045864">
    <property type="entry name" value="aa-tRNA-synth_II/BPL/LPL"/>
</dbReference>
<dbReference type="InterPro" id="IPR002318">
    <property type="entry name" value="Ala-tRNA-lgiase_IIc"/>
</dbReference>
<dbReference type="InterPro" id="IPR018162">
    <property type="entry name" value="Ala-tRNA-ligase_IIc_anticod-bd"/>
</dbReference>
<dbReference type="InterPro" id="IPR018165">
    <property type="entry name" value="Ala-tRNA-synth_IIc_core"/>
</dbReference>
<dbReference type="InterPro" id="IPR018164">
    <property type="entry name" value="Ala-tRNA-synth_IIc_N"/>
</dbReference>
<dbReference type="InterPro" id="IPR050058">
    <property type="entry name" value="Ala-tRNA_ligase"/>
</dbReference>
<dbReference type="InterPro" id="IPR023033">
    <property type="entry name" value="Ala_tRNA_ligase_euk/bac"/>
</dbReference>
<dbReference type="InterPro" id="IPR003156">
    <property type="entry name" value="DHHA1_dom"/>
</dbReference>
<dbReference type="InterPro" id="IPR018163">
    <property type="entry name" value="Thr/Ala-tRNA-synth_IIc_edit"/>
</dbReference>
<dbReference type="InterPro" id="IPR009000">
    <property type="entry name" value="Transl_B-barrel_sf"/>
</dbReference>
<dbReference type="InterPro" id="IPR012947">
    <property type="entry name" value="tRNA_SAD"/>
</dbReference>
<dbReference type="NCBIfam" id="TIGR00344">
    <property type="entry name" value="alaS"/>
    <property type="match status" value="1"/>
</dbReference>
<dbReference type="PANTHER" id="PTHR11777:SF9">
    <property type="entry name" value="ALANINE--TRNA LIGASE, CYTOPLASMIC"/>
    <property type="match status" value="1"/>
</dbReference>
<dbReference type="PANTHER" id="PTHR11777">
    <property type="entry name" value="ALANYL-TRNA SYNTHETASE"/>
    <property type="match status" value="1"/>
</dbReference>
<dbReference type="Pfam" id="PF02272">
    <property type="entry name" value="DHHA1"/>
    <property type="match status" value="1"/>
</dbReference>
<dbReference type="Pfam" id="PF01411">
    <property type="entry name" value="tRNA-synt_2c"/>
    <property type="match status" value="1"/>
</dbReference>
<dbReference type="Pfam" id="PF07973">
    <property type="entry name" value="tRNA_SAD"/>
    <property type="match status" value="1"/>
</dbReference>
<dbReference type="PRINTS" id="PR00980">
    <property type="entry name" value="TRNASYNTHALA"/>
</dbReference>
<dbReference type="SMART" id="SM00863">
    <property type="entry name" value="tRNA_SAD"/>
    <property type="match status" value="1"/>
</dbReference>
<dbReference type="SUPFAM" id="SSF55681">
    <property type="entry name" value="Class II aaRS and biotin synthetases"/>
    <property type="match status" value="1"/>
</dbReference>
<dbReference type="SUPFAM" id="SSF101353">
    <property type="entry name" value="Putative anticodon-binding domain of alanyl-tRNA synthetase (AlaRS)"/>
    <property type="match status" value="1"/>
</dbReference>
<dbReference type="SUPFAM" id="SSF55186">
    <property type="entry name" value="ThrRS/AlaRS common domain"/>
    <property type="match status" value="1"/>
</dbReference>
<dbReference type="SUPFAM" id="SSF50447">
    <property type="entry name" value="Translation proteins"/>
    <property type="match status" value="1"/>
</dbReference>
<dbReference type="PROSITE" id="PS50860">
    <property type="entry name" value="AA_TRNA_LIGASE_II_ALA"/>
    <property type="match status" value="1"/>
</dbReference>
<evidence type="ECO:0000255" key="1">
    <source>
        <dbReference type="HAMAP-Rule" id="MF_00036"/>
    </source>
</evidence>
<organism>
    <name type="scientific">Streptococcus pyogenes serotype M2 (strain MGAS10270)</name>
    <dbReference type="NCBI Taxonomy" id="370552"/>
    <lineage>
        <taxon>Bacteria</taxon>
        <taxon>Bacillati</taxon>
        <taxon>Bacillota</taxon>
        <taxon>Bacilli</taxon>
        <taxon>Lactobacillales</taxon>
        <taxon>Streptococcaceae</taxon>
        <taxon>Streptococcus</taxon>
    </lineage>
</organism>
<gene>
    <name evidence="1" type="primary">alaS</name>
    <name type="ordered locus">MGAS10270_Spy1202</name>
</gene>
<feature type="chain" id="PRO_0000347824" description="Alanine--tRNA ligase">
    <location>
        <begin position="1"/>
        <end position="872"/>
    </location>
</feature>
<feature type="binding site" evidence="1">
    <location>
        <position position="567"/>
    </location>
    <ligand>
        <name>Zn(2+)</name>
        <dbReference type="ChEBI" id="CHEBI:29105"/>
    </ligand>
</feature>
<feature type="binding site" evidence="1">
    <location>
        <position position="571"/>
    </location>
    <ligand>
        <name>Zn(2+)</name>
        <dbReference type="ChEBI" id="CHEBI:29105"/>
    </ligand>
</feature>
<feature type="binding site" evidence="1">
    <location>
        <position position="669"/>
    </location>
    <ligand>
        <name>Zn(2+)</name>
        <dbReference type="ChEBI" id="CHEBI:29105"/>
    </ligand>
</feature>
<feature type="binding site" evidence="1">
    <location>
        <position position="673"/>
    </location>
    <ligand>
        <name>Zn(2+)</name>
        <dbReference type="ChEBI" id="CHEBI:29105"/>
    </ligand>
</feature>
<protein>
    <recommendedName>
        <fullName evidence="1">Alanine--tRNA ligase</fullName>
        <ecNumber evidence="1">6.1.1.7</ecNumber>
    </recommendedName>
    <alternativeName>
        <fullName evidence="1">Alanyl-tRNA synthetase</fullName>
        <shortName evidence="1">AlaRS</shortName>
    </alternativeName>
</protein>
<reference key="1">
    <citation type="journal article" date="2006" name="Proc. Natl. Acad. Sci. U.S.A.">
        <title>Molecular genetic anatomy of inter- and intraserotype variation in the human bacterial pathogen group A Streptococcus.</title>
        <authorList>
            <person name="Beres S.B."/>
            <person name="Richter E.W."/>
            <person name="Nagiec M.J."/>
            <person name="Sumby P."/>
            <person name="Porcella S.F."/>
            <person name="DeLeo F.R."/>
            <person name="Musser J.M."/>
        </authorList>
    </citation>
    <scope>NUCLEOTIDE SEQUENCE [LARGE SCALE GENOMIC DNA]</scope>
    <source>
        <strain>MGAS10270</strain>
    </source>
</reference>
<sequence length="872" mass="96583">MKELSSAQIRQMWLDFWKSKGHCVEPSANLVPVNDPTLLWINSGVATLKKYFDGSVIPENPRITNAQKSIRTNDIENVGKTARHHTMFEMLGNFSIGDYFRDEAIEWGFELLTSPEWFDFPKDKLYMTYYPDDKDSYNRWIACGVEPSHLVPIEDNFWEIGAGPSGPDTEIFFDRGEDFDPENIGLRLLAEDIENDRYIEIWNIVLSQFNADPAVPRSEYKELPNKNIDTGAGLERLAAVMQGAKTNFETDLFMPIIREVEKLSGKTYDPDGDNMSFKVIADHIRALSFAIGDGALPGNEGRGYVLRRLLRRAVMHGRRLGINETFLYKLVLTVGQIMESYYPEVLEKRDFIEKIVKREEETFARTIDAGSGHLDSLLAQLKAEGKDTLEGKDIFKLYDTYGFPVELTEELAEDAGYKIDHEGFKSAMKEQQDRARAAVVKGGSMGMQNETLAGIVEESRFEYDTYSLESSLSVIIADNERTEAVSEGQALLVFAQTPFYAEMGGQVADTGRIKNDKGDTVAEVVDVQKAPNGQPLHTVNVLASLSVGTNYTLEINKERRLAVEKNHTATHLLHAALHNVIGEHATQAGSLNEEEFLRFDFTHFEAVSNEELRHIEQEVNEQIWNALTITTTETDVETAKEMGAMALFGEKYGKVVRVVQIGNYSVELCGGTHLNNSSEIGLFKIVKEEGIGSGTRRIIAVTGRQAFEAYRNQEDALKEIAATVKAPQLKDAAAKVQALSDSLRDFQKENAELKEKAAAAAAGDVFKDVQEAKGVRFIASQVDVADAGALRTFADNWKQKDYSDVLVLVAAIGEKVNVLVASKTKDVHAGNMIKELAPIVAGRGGGKPDMAMAGGSDASKIAELLAAVAETV</sequence>
<accession>Q1JG77</accession>
<proteinExistence type="inferred from homology"/>
<keyword id="KW-0030">Aminoacyl-tRNA synthetase</keyword>
<keyword id="KW-0067">ATP-binding</keyword>
<keyword id="KW-0963">Cytoplasm</keyword>
<keyword id="KW-0436">Ligase</keyword>
<keyword id="KW-0479">Metal-binding</keyword>
<keyword id="KW-0547">Nucleotide-binding</keyword>
<keyword id="KW-0648">Protein biosynthesis</keyword>
<keyword id="KW-0694">RNA-binding</keyword>
<keyword id="KW-0820">tRNA-binding</keyword>
<keyword id="KW-0862">Zinc</keyword>
<comment type="function">
    <text evidence="1">Catalyzes the attachment of alanine to tRNA(Ala) in a two-step reaction: alanine is first activated by ATP to form Ala-AMP and then transferred to the acceptor end of tRNA(Ala). Also edits incorrectly charged Ser-tRNA(Ala) and Gly-tRNA(Ala) via its editing domain.</text>
</comment>
<comment type="catalytic activity">
    <reaction evidence="1">
        <text>tRNA(Ala) + L-alanine + ATP = L-alanyl-tRNA(Ala) + AMP + diphosphate</text>
        <dbReference type="Rhea" id="RHEA:12540"/>
        <dbReference type="Rhea" id="RHEA-COMP:9657"/>
        <dbReference type="Rhea" id="RHEA-COMP:9923"/>
        <dbReference type="ChEBI" id="CHEBI:30616"/>
        <dbReference type="ChEBI" id="CHEBI:33019"/>
        <dbReference type="ChEBI" id="CHEBI:57972"/>
        <dbReference type="ChEBI" id="CHEBI:78442"/>
        <dbReference type="ChEBI" id="CHEBI:78497"/>
        <dbReference type="ChEBI" id="CHEBI:456215"/>
        <dbReference type="EC" id="6.1.1.7"/>
    </reaction>
</comment>
<comment type="cofactor">
    <cofactor evidence="1">
        <name>Zn(2+)</name>
        <dbReference type="ChEBI" id="CHEBI:29105"/>
    </cofactor>
    <text evidence="1">Binds 1 zinc ion per subunit.</text>
</comment>
<comment type="subcellular location">
    <subcellularLocation>
        <location evidence="1">Cytoplasm</location>
    </subcellularLocation>
</comment>
<comment type="domain">
    <text evidence="1">Consists of three domains; the N-terminal catalytic domain, the editing domain and the C-terminal C-Ala domain. The editing domain removes incorrectly charged amino acids, while the C-Ala domain, along with tRNA(Ala), serves as a bridge to cooperatively bring together the editing and aminoacylation centers thus stimulating deacylation of misacylated tRNAs.</text>
</comment>
<comment type="similarity">
    <text evidence="1">Belongs to the class-II aminoacyl-tRNA synthetase family.</text>
</comment>